<comment type="similarity">
    <text evidence="1">Belongs to the DM7 family.</text>
</comment>
<feature type="chain" id="PRO_0000378610" description="DM7 family protein GD16138">
    <location>
        <begin position="1"/>
        <end position="576"/>
    </location>
</feature>
<feature type="region of interest" description="Disordered" evidence="2">
    <location>
        <begin position="454"/>
        <end position="481"/>
    </location>
</feature>
<feature type="compositionally biased region" description="Acidic residues" evidence="2">
    <location>
        <begin position="457"/>
        <end position="478"/>
    </location>
</feature>
<proteinExistence type="inferred from homology"/>
<accession>B4R694</accession>
<evidence type="ECO:0000255" key="1"/>
<evidence type="ECO:0000256" key="2">
    <source>
        <dbReference type="SAM" id="MobiDB-lite"/>
    </source>
</evidence>
<evidence type="ECO:0000312" key="3">
    <source>
        <dbReference type="EMBL" id="EDX17371.1"/>
    </source>
</evidence>
<reference evidence="3" key="1">
    <citation type="journal article" date="2007" name="Nature">
        <title>Evolution of genes and genomes on the Drosophila phylogeny.</title>
        <authorList>
            <consortium name="Drosophila 12 genomes consortium"/>
        </authorList>
    </citation>
    <scope>NUCLEOTIDE SEQUENCE [LARGE SCALE GENOMIC DNA]</scope>
</reference>
<sequence>MSKRAKKRDKSTVEILQVYSASRDEEQMTDLKKTDYLPYLFNLVMPKQFYKSPNRIVMARLYPDVQKHDEQAAEYFEGFQTPCFDLPTKLFPEKTPIDKIVFMPKVMLPMGFEAGGVFGPGVLPRRCYPVDLISPDHKGPMPPLFVGLRGMKVSLSSMINTFLNMYDSPDGKEPHLYEMHATNHHYENDLAPEELMLRPDFTLSVAYTLPASMCLPSPYPYPSVPEQDNIYTPDLSKVLMLMPHQFNITVAILSTVNNPHDPSVAFATMGDDEECPKFELPNDVFPICEGVNRPIFLPKRFMPKGFDACCVFKPGSLSELWYIKRIGRFGTPQEQYNCSITPPLFVGKYTRNAASINMLEEISVHFDQKARECAKSLARLRLDALRLNSRNGSTKGFLVMESDKPTTPAGAYSVESYEEASEDGCVAKVTQECATESTDTRDDGINTADYQSQFPELEPDSEPEPEPEPQTEDEGEDEGDKKCLSCFKVDSDIDLISHAIAEMGVAELSMLGEVDPVPGVDTKLALDQLHEVFETRDEIRSNIDDLMRDHVCRMERDIMLALRQPIRKCSACAKHS</sequence>
<organism>
    <name type="scientific">Drosophila simulans</name>
    <name type="common">Fruit fly</name>
    <dbReference type="NCBI Taxonomy" id="7240"/>
    <lineage>
        <taxon>Eukaryota</taxon>
        <taxon>Metazoa</taxon>
        <taxon>Ecdysozoa</taxon>
        <taxon>Arthropoda</taxon>
        <taxon>Hexapoda</taxon>
        <taxon>Insecta</taxon>
        <taxon>Pterygota</taxon>
        <taxon>Neoptera</taxon>
        <taxon>Endopterygota</taxon>
        <taxon>Diptera</taxon>
        <taxon>Brachycera</taxon>
        <taxon>Muscomorpha</taxon>
        <taxon>Ephydroidea</taxon>
        <taxon>Drosophilidae</taxon>
        <taxon>Drosophila</taxon>
        <taxon>Sophophora</taxon>
    </lineage>
</organism>
<dbReference type="EMBL" id="CM000366">
    <property type="protein sequence ID" value="EDX17371.1"/>
    <property type="molecule type" value="Genomic_DNA"/>
</dbReference>
<dbReference type="EnsemblMetazoa" id="FBtr0216048">
    <property type="protein sequence ID" value="FBpp0214540"/>
    <property type="gene ID" value="FBgn0187772"/>
</dbReference>
<dbReference type="EnsemblMetazoa" id="XM_002106383.4">
    <property type="protein sequence ID" value="XP_002106419.1"/>
    <property type="gene ID" value="LOC6725403"/>
</dbReference>
<dbReference type="GeneID" id="6725403"/>
<dbReference type="KEGG" id="dsi:Dsimw501_GD16138"/>
<dbReference type="HOGENOM" id="CLU_477581_0_0_1"/>
<dbReference type="OMA" id="NTADYQS"/>
<dbReference type="OrthoDB" id="7867651at2759"/>
<dbReference type="PhylomeDB" id="B4R694"/>
<dbReference type="Proteomes" id="UP000000304">
    <property type="component" value="Chromosome X"/>
</dbReference>
<dbReference type="Bgee" id="FBgn0187772">
    <property type="expression patterns" value="Expressed in male reproductive system and 3 other cell types or tissues"/>
</dbReference>
<dbReference type="InterPro" id="IPR006610">
    <property type="entry name" value="DM7"/>
</dbReference>
<dbReference type="SMART" id="SM00688">
    <property type="entry name" value="DM7"/>
    <property type="match status" value="2"/>
</dbReference>
<name>DM7B_DROSI</name>
<protein>
    <recommendedName>
        <fullName>DM7 family protein GD16138</fullName>
    </recommendedName>
</protein>
<gene>
    <name type="ORF">GD16138</name>
</gene>
<keyword id="KW-1185">Reference proteome</keyword>
<keyword id="KW-0677">Repeat</keyword>